<accession>B4EZM8</accession>
<sequence length="192" mass="21116">MITITDAAQAHFAKLLANQEPNTQIRVFVINPGTPNAECGVSYCPPDAVEPNDTEIKFEKLSAYVDDISAPFLEDAEIDFVTDQLGSQLTLKAPNAKMRKVADDAPLIERVEYVLQSQINPQLASHGGRVSLMEITEDGYAILQFGGGCNGCSMIDVTLKDGIEKELLNLFPEELKGVKDLTEHQRGDHSYY</sequence>
<keyword id="KW-0004">4Fe-4S</keyword>
<keyword id="KW-0408">Iron</keyword>
<keyword id="KW-0411">Iron-sulfur</keyword>
<keyword id="KW-0479">Metal-binding</keyword>
<keyword id="KW-1185">Reference proteome</keyword>
<organism>
    <name type="scientific">Proteus mirabilis (strain HI4320)</name>
    <dbReference type="NCBI Taxonomy" id="529507"/>
    <lineage>
        <taxon>Bacteria</taxon>
        <taxon>Pseudomonadati</taxon>
        <taxon>Pseudomonadota</taxon>
        <taxon>Gammaproteobacteria</taxon>
        <taxon>Enterobacterales</taxon>
        <taxon>Morganellaceae</taxon>
        <taxon>Proteus</taxon>
    </lineage>
</organism>
<name>NFUA_PROMH</name>
<reference key="1">
    <citation type="journal article" date="2008" name="J. Bacteriol.">
        <title>Complete genome sequence of uropathogenic Proteus mirabilis, a master of both adherence and motility.</title>
        <authorList>
            <person name="Pearson M.M."/>
            <person name="Sebaihia M."/>
            <person name="Churcher C."/>
            <person name="Quail M.A."/>
            <person name="Seshasayee A.S."/>
            <person name="Luscombe N.M."/>
            <person name="Abdellah Z."/>
            <person name="Arrosmith C."/>
            <person name="Atkin B."/>
            <person name="Chillingworth T."/>
            <person name="Hauser H."/>
            <person name="Jagels K."/>
            <person name="Moule S."/>
            <person name="Mungall K."/>
            <person name="Norbertczak H."/>
            <person name="Rabbinowitsch E."/>
            <person name="Walker D."/>
            <person name="Whithead S."/>
            <person name="Thomson N.R."/>
            <person name="Rather P.N."/>
            <person name="Parkhill J."/>
            <person name="Mobley H.L.T."/>
        </authorList>
    </citation>
    <scope>NUCLEOTIDE SEQUENCE [LARGE SCALE GENOMIC DNA]</scope>
    <source>
        <strain>HI4320</strain>
    </source>
</reference>
<protein>
    <recommendedName>
        <fullName evidence="1">Fe/S biogenesis protein NfuA</fullName>
    </recommendedName>
</protein>
<dbReference type="EMBL" id="AM942759">
    <property type="protein sequence ID" value="CAR45763.1"/>
    <property type="molecule type" value="Genomic_DNA"/>
</dbReference>
<dbReference type="RefSeq" id="WP_004246756.1">
    <property type="nucleotide sequence ID" value="NC_010554.1"/>
</dbReference>
<dbReference type="SMR" id="B4EZM8"/>
<dbReference type="EnsemblBacteria" id="CAR45763">
    <property type="protein sequence ID" value="CAR45763"/>
    <property type="gene ID" value="PMI2926"/>
</dbReference>
<dbReference type="GeneID" id="6802228"/>
<dbReference type="KEGG" id="pmr:PMI2926"/>
<dbReference type="eggNOG" id="COG0316">
    <property type="taxonomic scope" value="Bacteria"/>
</dbReference>
<dbReference type="eggNOG" id="COG0694">
    <property type="taxonomic scope" value="Bacteria"/>
</dbReference>
<dbReference type="HOGENOM" id="CLU_094569_0_0_6"/>
<dbReference type="Proteomes" id="UP000008319">
    <property type="component" value="Chromosome"/>
</dbReference>
<dbReference type="GO" id="GO:0051539">
    <property type="term" value="F:4 iron, 4 sulfur cluster binding"/>
    <property type="evidence" value="ECO:0007669"/>
    <property type="project" value="UniProtKB-UniRule"/>
</dbReference>
<dbReference type="GO" id="GO:0005506">
    <property type="term" value="F:iron ion binding"/>
    <property type="evidence" value="ECO:0007669"/>
    <property type="project" value="InterPro"/>
</dbReference>
<dbReference type="GO" id="GO:0016226">
    <property type="term" value="P:iron-sulfur cluster assembly"/>
    <property type="evidence" value="ECO:0007669"/>
    <property type="project" value="UniProtKB-UniRule"/>
</dbReference>
<dbReference type="GO" id="GO:0051604">
    <property type="term" value="P:protein maturation"/>
    <property type="evidence" value="ECO:0007669"/>
    <property type="project" value="UniProtKB-UniRule"/>
</dbReference>
<dbReference type="Gene3D" id="3.30.300.130">
    <property type="entry name" value="Fe-S cluster assembly (FSCA)"/>
    <property type="match status" value="1"/>
</dbReference>
<dbReference type="Gene3D" id="2.60.300.12">
    <property type="entry name" value="HesB-like domain"/>
    <property type="match status" value="1"/>
</dbReference>
<dbReference type="HAMAP" id="MF_01637">
    <property type="entry name" value="Fe_S_biogen_NfuA"/>
    <property type="match status" value="1"/>
</dbReference>
<dbReference type="InterPro" id="IPR017726">
    <property type="entry name" value="Fe/S_biogenesis_protein_NfuA"/>
</dbReference>
<dbReference type="InterPro" id="IPR000361">
    <property type="entry name" value="FeS_biogenesis"/>
</dbReference>
<dbReference type="InterPro" id="IPR034904">
    <property type="entry name" value="FSCA_dom_sf"/>
</dbReference>
<dbReference type="InterPro" id="IPR035903">
    <property type="entry name" value="HesB-like_dom_sf"/>
</dbReference>
<dbReference type="InterPro" id="IPR001075">
    <property type="entry name" value="NIF_FeS_clus_asmbl_NifU_C"/>
</dbReference>
<dbReference type="NCBIfam" id="NF008392">
    <property type="entry name" value="PRK11190.1"/>
    <property type="match status" value="1"/>
</dbReference>
<dbReference type="NCBIfam" id="TIGR03341">
    <property type="entry name" value="YhgI_GntY"/>
    <property type="match status" value="1"/>
</dbReference>
<dbReference type="PANTHER" id="PTHR11178:SF51">
    <property type="entry name" value="FE_S BIOGENESIS PROTEIN NFUA"/>
    <property type="match status" value="1"/>
</dbReference>
<dbReference type="PANTHER" id="PTHR11178">
    <property type="entry name" value="IRON-SULFUR CLUSTER SCAFFOLD PROTEIN NFU-RELATED"/>
    <property type="match status" value="1"/>
</dbReference>
<dbReference type="Pfam" id="PF01521">
    <property type="entry name" value="Fe-S_biosyn"/>
    <property type="match status" value="1"/>
</dbReference>
<dbReference type="Pfam" id="PF01106">
    <property type="entry name" value="NifU"/>
    <property type="match status" value="1"/>
</dbReference>
<dbReference type="SUPFAM" id="SSF117916">
    <property type="entry name" value="Fe-S cluster assembly (FSCA) domain-like"/>
    <property type="match status" value="1"/>
</dbReference>
<dbReference type="SUPFAM" id="SSF89360">
    <property type="entry name" value="HesB-like domain"/>
    <property type="match status" value="1"/>
</dbReference>
<proteinExistence type="inferred from homology"/>
<comment type="function">
    <text evidence="1">Involved in iron-sulfur cluster biogenesis. Binds a 4Fe-4S cluster, can transfer this cluster to apoproteins, and thereby intervenes in the maturation of Fe/S proteins. Could also act as a scaffold/chaperone for damaged Fe/S proteins.</text>
</comment>
<comment type="cofactor">
    <cofactor evidence="1">
        <name>[4Fe-4S] cluster</name>
        <dbReference type="ChEBI" id="CHEBI:49883"/>
    </cofactor>
    <text evidence="1">Binds 1 [4Fe-4S] cluster per subunit. The cluster is presumably bound at the interface of two monomers.</text>
</comment>
<comment type="subunit">
    <text evidence="1">Homodimer.</text>
</comment>
<comment type="similarity">
    <text evidence="1">Belongs to the NfuA family.</text>
</comment>
<evidence type="ECO:0000255" key="1">
    <source>
        <dbReference type="HAMAP-Rule" id="MF_01637"/>
    </source>
</evidence>
<feature type="chain" id="PRO_1000186756" description="Fe/S biogenesis protein NfuA">
    <location>
        <begin position="1"/>
        <end position="192"/>
    </location>
</feature>
<feature type="binding site" evidence="1">
    <location>
        <position position="149"/>
    </location>
    <ligand>
        <name>[4Fe-4S] cluster</name>
        <dbReference type="ChEBI" id="CHEBI:49883"/>
    </ligand>
</feature>
<feature type="binding site" evidence="1">
    <location>
        <position position="152"/>
    </location>
    <ligand>
        <name>[4Fe-4S] cluster</name>
        <dbReference type="ChEBI" id="CHEBI:49883"/>
    </ligand>
</feature>
<gene>
    <name evidence="1" type="primary">nfuA</name>
    <name type="ordered locus">PMI2926</name>
</gene>